<feature type="chain" id="PRO_0000393279" description="Probable thiol methyltransferase 2">
    <location>
        <begin position="1"/>
        <end position="226"/>
    </location>
</feature>
<feature type="binding site" evidence="1">
    <location>
        <position position="29"/>
    </location>
    <ligand>
        <name>S-adenosyl-L-methionine</name>
        <dbReference type="ChEBI" id="CHEBI:59789"/>
    </ligand>
</feature>
<feature type="binding site" evidence="1 2">
    <location>
        <position position="33"/>
    </location>
    <ligand>
        <name>S-adenosyl-L-methionine</name>
        <dbReference type="ChEBI" id="CHEBI:59789"/>
    </ligand>
</feature>
<feature type="binding site" evidence="1">
    <location>
        <position position="40"/>
    </location>
    <ligand>
        <name>S-adenosyl-L-methionine</name>
        <dbReference type="ChEBI" id="CHEBI:59789"/>
    </ligand>
</feature>
<feature type="binding site" evidence="1">
    <location>
        <position position="67"/>
    </location>
    <ligand>
        <name>S-adenosyl-L-methionine</name>
        <dbReference type="ChEBI" id="CHEBI:59789"/>
    </ligand>
</feature>
<feature type="binding site" evidence="1 2">
    <location>
        <position position="88"/>
    </location>
    <ligand>
        <name>S-adenosyl-L-methionine</name>
        <dbReference type="ChEBI" id="CHEBI:59789"/>
    </ligand>
</feature>
<feature type="binding site" evidence="1">
    <location>
        <begin position="116"/>
        <end position="117"/>
    </location>
    <ligand>
        <name>S-adenosyl-L-methionine</name>
        <dbReference type="ChEBI" id="CHEBI:59789"/>
    </ligand>
</feature>
<feature type="binding site" evidence="1">
    <location>
        <position position="132"/>
    </location>
    <ligand>
        <name>S-adenosyl-L-methionine</name>
        <dbReference type="ChEBI" id="CHEBI:59789"/>
    </ligand>
</feature>
<feature type="modified residue" description="Phosphoserine" evidence="1">
    <location>
        <position position="79"/>
    </location>
</feature>
<keyword id="KW-0489">Methyltransferase</keyword>
<keyword id="KW-0597">Phosphoprotein</keyword>
<keyword id="KW-1185">Reference proteome</keyword>
<keyword id="KW-0949">S-adenosyl-L-methionine</keyword>
<keyword id="KW-0808">Transferase</keyword>
<dbReference type="EC" id="2.1.1.9"/>
<dbReference type="EMBL" id="AC004005">
    <property type="protein sequence ID" value="AAC23402.1"/>
    <property type="status" value="ALT_SEQ"/>
    <property type="molecule type" value="Genomic_DNA"/>
</dbReference>
<dbReference type="EMBL" id="CP002685">
    <property type="protein sequence ID" value="AEC10350.1"/>
    <property type="molecule type" value="Genomic_DNA"/>
</dbReference>
<dbReference type="EMBL" id="BT015152">
    <property type="protein sequence ID" value="AAT85748.1"/>
    <property type="molecule type" value="mRNA"/>
</dbReference>
<dbReference type="EMBL" id="BT015729">
    <property type="protein sequence ID" value="AAU45227.1"/>
    <property type="molecule type" value="mRNA"/>
</dbReference>
<dbReference type="PIR" id="T00674">
    <property type="entry name" value="T00674"/>
</dbReference>
<dbReference type="RefSeq" id="NP_850403.1">
    <property type="nucleotide sequence ID" value="NM_180072.3"/>
</dbReference>
<dbReference type="SMR" id="Q6AWU6"/>
<dbReference type="FunCoup" id="Q6AWU6">
    <property type="interactions" value="237"/>
</dbReference>
<dbReference type="STRING" id="3702.Q6AWU6"/>
<dbReference type="iPTMnet" id="Q6AWU6"/>
<dbReference type="PaxDb" id="3702-AT2G43940.1"/>
<dbReference type="ProteomicsDB" id="230216"/>
<dbReference type="DNASU" id="818998"/>
<dbReference type="EnsemblPlants" id="AT2G43940.1">
    <property type="protein sequence ID" value="AT2G43940.1"/>
    <property type="gene ID" value="AT2G43940"/>
</dbReference>
<dbReference type="GeneID" id="818998"/>
<dbReference type="Gramene" id="AT2G43940.1">
    <property type="protein sequence ID" value="AT2G43940.1"/>
    <property type="gene ID" value="AT2G43940"/>
</dbReference>
<dbReference type="KEGG" id="ath:AT2G43940"/>
<dbReference type="Araport" id="AT2G43940"/>
<dbReference type="TAIR" id="AT2G43940">
    <property type="gene designation" value="HOL3"/>
</dbReference>
<dbReference type="eggNOG" id="ENOG502QS1V">
    <property type="taxonomic scope" value="Eukaryota"/>
</dbReference>
<dbReference type="HOGENOM" id="CLU_056435_1_1_1"/>
<dbReference type="InParanoid" id="Q6AWU6"/>
<dbReference type="OMA" id="LREPSEH"/>
<dbReference type="PhylomeDB" id="Q6AWU6"/>
<dbReference type="BRENDA" id="2.1.1.165">
    <property type="organism ID" value="399"/>
</dbReference>
<dbReference type="SABIO-RK" id="Q6AWU6"/>
<dbReference type="PRO" id="PR:Q6AWU6"/>
<dbReference type="Proteomes" id="UP000006548">
    <property type="component" value="Chromosome 2"/>
</dbReference>
<dbReference type="ExpressionAtlas" id="Q6AWU6">
    <property type="expression patterns" value="baseline and differential"/>
</dbReference>
<dbReference type="GO" id="GO:0009941">
    <property type="term" value="C:chloroplast envelope"/>
    <property type="evidence" value="ECO:0007005"/>
    <property type="project" value="TAIR"/>
</dbReference>
<dbReference type="GO" id="GO:0005829">
    <property type="term" value="C:cytosol"/>
    <property type="evidence" value="ECO:0000314"/>
    <property type="project" value="TAIR"/>
</dbReference>
<dbReference type="GO" id="GO:0005777">
    <property type="term" value="C:peroxisome"/>
    <property type="evidence" value="ECO:0000314"/>
    <property type="project" value="TAIR"/>
</dbReference>
<dbReference type="GO" id="GO:0018708">
    <property type="term" value="F:thiol S-methyltransferase activity"/>
    <property type="evidence" value="ECO:0000314"/>
    <property type="project" value="UniProtKB"/>
</dbReference>
<dbReference type="GO" id="GO:0032259">
    <property type="term" value="P:methylation"/>
    <property type="evidence" value="ECO:0007669"/>
    <property type="project" value="UniProtKB-KW"/>
</dbReference>
<dbReference type="CDD" id="cd02440">
    <property type="entry name" value="AdoMet_MTases"/>
    <property type="match status" value="1"/>
</dbReference>
<dbReference type="Gene3D" id="3.40.50.150">
    <property type="entry name" value="Vaccinia Virus protein VP39"/>
    <property type="match status" value="1"/>
</dbReference>
<dbReference type="InterPro" id="IPR029063">
    <property type="entry name" value="SAM-dependent_MTases_sf"/>
</dbReference>
<dbReference type="InterPro" id="IPR008854">
    <property type="entry name" value="TPMT"/>
</dbReference>
<dbReference type="PANTHER" id="PTHR32183">
    <property type="match status" value="1"/>
</dbReference>
<dbReference type="PANTHER" id="PTHR32183:SF11">
    <property type="entry name" value="THIOL METHYLTRANSFERASE 2-RELATED"/>
    <property type="match status" value="1"/>
</dbReference>
<dbReference type="Pfam" id="PF05724">
    <property type="entry name" value="TPMT"/>
    <property type="match status" value="1"/>
</dbReference>
<dbReference type="SUPFAM" id="SSF53335">
    <property type="entry name" value="S-adenosyl-L-methionine-dependent methyltransferases"/>
    <property type="match status" value="1"/>
</dbReference>
<dbReference type="PROSITE" id="PS51585">
    <property type="entry name" value="SAM_MT_TPMT"/>
    <property type="match status" value="1"/>
</dbReference>
<accession>Q6AWU6</accession>
<accession>O80564</accession>
<name>HOL3_ARATH</name>
<gene>
    <name type="primary">HOL3</name>
    <name type="ordered locus">At2g43940</name>
    <name type="ORF">F6E13.7</name>
</gene>
<proteinExistence type="evidence at protein level"/>
<reference key="1">
    <citation type="journal article" date="1999" name="Nature">
        <title>Sequence and analysis of chromosome 2 of the plant Arabidopsis thaliana.</title>
        <authorList>
            <person name="Lin X."/>
            <person name="Kaul S."/>
            <person name="Rounsley S.D."/>
            <person name="Shea T.P."/>
            <person name="Benito M.-I."/>
            <person name="Town C.D."/>
            <person name="Fujii C.Y."/>
            <person name="Mason T.M."/>
            <person name="Bowman C.L."/>
            <person name="Barnstead M.E."/>
            <person name="Feldblyum T.V."/>
            <person name="Buell C.R."/>
            <person name="Ketchum K.A."/>
            <person name="Lee J.J."/>
            <person name="Ronning C.M."/>
            <person name="Koo H.L."/>
            <person name="Moffat K.S."/>
            <person name="Cronin L.A."/>
            <person name="Shen M."/>
            <person name="Pai G."/>
            <person name="Van Aken S."/>
            <person name="Umayam L."/>
            <person name="Tallon L.J."/>
            <person name="Gill J.E."/>
            <person name="Adams M.D."/>
            <person name="Carrera A.J."/>
            <person name="Creasy T.H."/>
            <person name="Goodman H.M."/>
            <person name="Somerville C.R."/>
            <person name="Copenhaver G.P."/>
            <person name="Preuss D."/>
            <person name="Nierman W.C."/>
            <person name="White O."/>
            <person name="Eisen J.A."/>
            <person name="Salzberg S.L."/>
            <person name="Fraser C.M."/>
            <person name="Venter J.C."/>
        </authorList>
    </citation>
    <scope>NUCLEOTIDE SEQUENCE [LARGE SCALE GENOMIC DNA]</scope>
    <source>
        <strain>cv. Columbia</strain>
    </source>
</reference>
<reference key="2">
    <citation type="journal article" date="2017" name="Plant J.">
        <title>Araport11: a complete reannotation of the Arabidopsis thaliana reference genome.</title>
        <authorList>
            <person name="Cheng C.Y."/>
            <person name="Krishnakumar V."/>
            <person name="Chan A.P."/>
            <person name="Thibaud-Nissen F."/>
            <person name="Schobel S."/>
            <person name="Town C.D."/>
        </authorList>
    </citation>
    <scope>GENOME REANNOTATION</scope>
    <source>
        <strain>cv. Columbia</strain>
    </source>
</reference>
<reference key="3">
    <citation type="submission" date="2004-09" db="EMBL/GenBank/DDBJ databases">
        <title>Arabidopsis ORF clones.</title>
        <authorList>
            <person name="Cheuk R."/>
            <person name="Chen H."/>
            <person name="Kim C.J."/>
            <person name="Shinn P."/>
            <person name="Ecker J.R."/>
        </authorList>
    </citation>
    <scope>NUCLEOTIDE SEQUENCE [LARGE SCALE MRNA]</scope>
</reference>
<reference key="4">
    <citation type="journal article" date="2007" name="Plant Biotechnol.">
        <title>Characterization of three halide methyltransferases in Arabidopsis thaliana.</title>
        <authorList>
            <person name="Nagatoshi Y."/>
            <person name="Nakamura T."/>
        </authorList>
    </citation>
    <scope>FUNCTION</scope>
</reference>
<reference key="5">
    <citation type="journal article" date="2009" name="J. Biol. Chem.">
        <title>Arabidopsis HARMLESS TO OZONE LAYER protein methylates a glucosinolate breakdown product and functions in resistance to Pseudomonas syringae pv. maculicola.</title>
        <authorList>
            <person name="Nagatoshi Y."/>
            <person name="Nakamura T."/>
        </authorList>
    </citation>
    <scope>CATALYTIC ACTIVITY</scope>
    <scope>BIOPHYSICOCHEMICAL PROPERTIES</scope>
    <scope>DISRUPTION PHENOTYPE</scope>
</reference>
<protein>
    <recommendedName>
        <fullName>Probable thiol methyltransferase 2</fullName>
        <ecNumber>2.1.1.9</ecNumber>
    </recommendedName>
    <alternativeName>
        <fullName>Protein HARMLESS TO OZONE LAYER 3</fullName>
        <shortName>AtHOL3</shortName>
    </alternativeName>
</protein>
<comment type="function">
    <text evidence="4">S-adenosyl-L-methionine-dependent methyltransferase.</text>
</comment>
<comment type="catalytic activity">
    <reaction evidence="3">
        <text>a thiol + S-adenosyl-L-methionine = a methyl thioether + S-adenosyl-L-homocysteine + H(+)</text>
        <dbReference type="Rhea" id="RHEA:18277"/>
        <dbReference type="ChEBI" id="CHEBI:15378"/>
        <dbReference type="ChEBI" id="CHEBI:29256"/>
        <dbReference type="ChEBI" id="CHEBI:57856"/>
        <dbReference type="ChEBI" id="CHEBI:59789"/>
        <dbReference type="ChEBI" id="CHEBI:86315"/>
        <dbReference type="EC" id="2.1.1.9"/>
    </reaction>
</comment>
<comment type="biophysicochemical properties">
    <kinetics>
        <KM evidence="3">3.1 mM for KSCN</KM>
        <KM evidence="3">1.3 mM for ammonium sulfide</KM>
        <KM evidence="3">40 uM for S-adenosyl-L-methionine</KM>
        <Vmax evidence="3">110.0 nmol/sec/mg enzyme toward KSCN</Vmax>
        <Vmax evidence="3">1.3 umol/sec/mg enzyme toward ammonium sulfide</Vmax>
        <Vmax evidence="3">410.0 nmol/sec/mg enzyme toward S-adenosyl-L-methionine</Vmax>
    </kinetics>
</comment>
<comment type="disruption phenotype">
    <text evidence="3">No visible phenotype under normal growth conditions.</text>
</comment>
<comment type="similarity">
    <text evidence="2">Belongs to the class I-like SAM-binding methyltransferase superfamily. TPMT family.</text>
</comment>
<comment type="sequence caution" evidence="5">
    <conflict type="erroneous gene model prediction">
        <sequence resource="EMBL-CDS" id="AAC23402"/>
    </conflict>
</comment>
<evidence type="ECO:0000250" key="1">
    <source>
        <dbReference type="UniProtKB" id="Q0WP12"/>
    </source>
</evidence>
<evidence type="ECO:0000255" key="2">
    <source>
        <dbReference type="PROSITE-ProRule" id="PRU00918"/>
    </source>
</evidence>
<evidence type="ECO:0000269" key="3">
    <source>
    </source>
</evidence>
<evidence type="ECO:0000269" key="4">
    <source ref="4"/>
</evidence>
<evidence type="ECO:0000305" key="5"/>
<organism>
    <name type="scientific">Arabidopsis thaliana</name>
    <name type="common">Mouse-ear cress</name>
    <dbReference type="NCBI Taxonomy" id="3702"/>
    <lineage>
        <taxon>Eukaryota</taxon>
        <taxon>Viridiplantae</taxon>
        <taxon>Streptophyta</taxon>
        <taxon>Embryophyta</taxon>
        <taxon>Tracheophyta</taxon>
        <taxon>Spermatophyta</taxon>
        <taxon>Magnoliopsida</taxon>
        <taxon>eudicotyledons</taxon>
        <taxon>Gunneridae</taxon>
        <taxon>Pentapetalae</taxon>
        <taxon>rosids</taxon>
        <taxon>malvids</taxon>
        <taxon>Brassicales</taxon>
        <taxon>Brassicaceae</taxon>
        <taxon>Camelineae</taxon>
        <taxon>Arabidopsis</taxon>
    </lineage>
</organism>
<sequence>MENAGKATSLQSSRDLFHRLMSENSSGGWEKSWEAGATPWDLGKPTPVIAHLVETGSLPNGRALVPGCGTGYDVVAMASPDRHVVGLDISKTAVERSTKKFSTLPNAKYFSFLSEDFFTWEPAEKFDLIFDYTFFCAFEPGVRPLWAQRMEKLLKPGGELITLMFPIDERSGGPPYEVSVSEYEKVLIPLGFEAISIVDNELAVGPRKGMEKLGRWKKSSTFHSTL</sequence>